<evidence type="ECO:0000255" key="1">
    <source>
        <dbReference type="PROSITE-ProRule" id="PRU00405"/>
    </source>
</evidence>
<evidence type="ECO:0000255" key="2">
    <source>
        <dbReference type="PROSITE-ProRule" id="PRU00408"/>
    </source>
</evidence>
<evidence type="ECO:0000255" key="3">
    <source>
        <dbReference type="PROSITE-ProRule" id="PRU00450"/>
    </source>
</evidence>
<evidence type="ECO:0000255" key="4">
    <source>
        <dbReference type="PROSITE-ProRule" id="PRU00457"/>
    </source>
</evidence>
<evidence type="ECO:0000255" key="5">
    <source>
        <dbReference type="PROSITE-ProRule" id="PRU00506"/>
    </source>
</evidence>
<evidence type="ECO:0000256" key="6">
    <source>
        <dbReference type="SAM" id="MobiDB-lite"/>
    </source>
</evidence>
<evidence type="ECO:0000305" key="7"/>
<sequence>NKSRKRRNRESLLGAATVEPPKPIPLTWKTEKPVWVNQWPLPKQKLEALHLLANEQLEKGHIEPSFSPWNSPVFVIQKKSGKWRMLTDLRAVNAVIQPMGPLQPGLPSPAMIPKDWPLIIIDLKDCFFTIPLAEQDCEKFAFTIPAINNKEPATRFQWKVLPQGMLNSPTICQTFVGRALQPVREKFSDCYIIHCIDDILCAAETKDKLIDCYTFLQAEVANAGLAIASDKIQTSTPFHYLGMQIENRKIKPQKIEIRKDTLKTLNDFQKLLGDINWIRPTLGIPTYAMSNLFSILRGDSDLNSKRMLTPEATKEIKLVEEKIQSAQINRIDPLAPLQLLIFATAHSPTGIIIQNTDLVEWSFLPHSTVKTFTLYLDQIATLIGQTRLRIIKLCGNDPDKIVVPLTKEQVRQAFINSGAWKIGLANFVGIIDNHYPKTKIFQFLKLTTWILPKITRREPLENALTVFTDGSSNGKAAYTGPKERVIKTPYQSAQRAELVAVITVLQDFDQPINIISDSAYVVQATRDVETALIKYSMDDQLNQLFNLLQQTVRKRNFPFYITHIRAHTNLPGPLTKANEQADLLVSSALIKAQELHALTHVNAAGLKNKFDVTWKQAKDIVQHCTQCQVLHLPTQEAGVNPRGLCPNALWQMDVTHVPSFGRLSYVHVTVDTYSHFIWATCQTGESTSHVKKHLLSCFAVMGVPEKIKTDNGPGYCSKAFQKFLSQWKISHTTGIPYNSQGQAIVERTNRTLKTQLVKQKEGGDSKECTTPQMQLNLALYTLNFLNIYRNQTTTSAEQHLTGKKNSPHEGKLIWWKDNKNKTWEIGKVITWGRGFACVSPGENQLPVWIPTRHLKFYNEPIRDAKKSTSAETETSQSSTVDSQDEQNGDVRRTDEVAIHQEGRAANLGTTKEADAVSYKISREHKGDTNPREYAACSLDDCINGGKSPYACRSSCS</sequence>
<proteinExistence type="evidence at transcript level"/>
<accession>Q9BXR3</accession>
<accession>Q6KH04</accession>
<accession>Q9BXR4</accession>
<accession>Q9UKH5</accession>
<accession>Q9UP31</accession>
<accession>Q9WIK9</accession>
<accession>Q9WJR4</accession>
<dbReference type="EC" id="2.7.7.49"/>
<dbReference type="EC" id="3.1.26.4"/>
<dbReference type="EMBL" id="AF074086">
    <property type="protein sequence ID" value="AAD21097.1"/>
    <property type="molecule type" value="Genomic_DNA"/>
</dbReference>
<dbReference type="EMBL" id="AF074086">
    <property type="protein sequence ID" value="AAF88167.1"/>
    <property type="molecule type" value="Genomic_DNA"/>
</dbReference>
<dbReference type="EMBL" id="AF164614">
    <property type="protein sequence ID" value="AAD51797.1"/>
    <property type="status" value="ALT_SEQ"/>
    <property type="molecule type" value="Genomic_DNA"/>
</dbReference>
<dbReference type="EMBL" id="AF298587">
    <property type="protein sequence ID" value="AAK11553.1"/>
    <property type="molecule type" value="Genomic_DNA"/>
</dbReference>
<dbReference type="EMBL" id="AF298588">
    <property type="protein sequence ID" value="AAK11554.1"/>
    <property type="molecule type" value="Genomic_DNA"/>
</dbReference>
<dbReference type="EMBL" id="Y17832">
    <property type="protein sequence ID" value="CAA76879.1"/>
    <property type="status" value="ALT_INIT"/>
    <property type="molecule type" value="Genomic_DNA"/>
</dbReference>
<dbReference type="EMBL" id="Y17834">
    <property type="protein sequence ID" value="CAA76885.1"/>
    <property type="status" value="ALT_INIT"/>
    <property type="molecule type" value="Genomic_DNA"/>
</dbReference>
<dbReference type="EMBL" id="AC072054">
    <property type="status" value="NOT_ANNOTATED_CDS"/>
    <property type="molecule type" value="Genomic_DNA"/>
</dbReference>
<dbReference type="EMBL" id="AF080233">
    <property type="protein sequence ID" value="AAC63293.1"/>
    <property type="molecule type" value="mRNA"/>
</dbReference>
<dbReference type="SMR" id="Q9BXR3"/>
<dbReference type="FunCoup" id="Q9BXR3">
    <property type="interactions" value="8"/>
</dbReference>
<dbReference type="GlyGen" id="Q9BXR3">
    <property type="glycosylation" value="3 sites"/>
</dbReference>
<dbReference type="BioMuta" id="HGNC:13915"/>
<dbReference type="DMDM" id="52000839"/>
<dbReference type="MassIVE" id="Q9BXR3"/>
<dbReference type="PeptideAtlas" id="Q9BXR3"/>
<dbReference type="AGR" id="HGNC:13915"/>
<dbReference type="GeneCards" id="ERVK-6"/>
<dbReference type="HGNC" id="HGNC:13915">
    <property type="gene designation" value="ERVK-6"/>
</dbReference>
<dbReference type="MIM" id="605626">
    <property type="type" value="gene"/>
</dbReference>
<dbReference type="neXtProt" id="NX_Q9BXR3"/>
<dbReference type="InParanoid" id="Q9BXR3"/>
<dbReference type="PAN-GO" id="Q9BXR3">
    <property type="GO annotations" value="1 GO annotation based on evolutionary models"/>
</dbReference>
<dbReference type="PhylomeDB" id="Q9BXR3"/>
<dbReference type="Pharos" id="Q9BXR3">
    <property type="development level" value="Tdark"/>
</dbReference>
<dbReference type="Proteomes" id="UP000005640">
    <property type="component" value="Unplaced"/>
</dbReference>
<dbReference type="RNAct" id="Q9BXR3">
    <property type="molecule type" value="protein"/>
</dbReference>
<dbReference type="GO" id="GO:0003677">
    <property type="term" value="F:DNA binding"/>
    <property type="evidence" value="ECO:0007669"/>
    <property type="project" value="UniProtKB-KW"/>
</dbReference>
<dbReference type="GO" id="GO:0035613">
    <property type="term" value="F:RNA stem-loop binding"/>
    <property type="evidence" value="ECO:0000318"/>
    <property type="project" value="GO_Central"/>
</dbReference>
<dbReference type="GO" id="GO:0003964">
    <property type="term" value="F:RNA-directed DNA polymerase activity"/>
    <property type="evidence" value="ECO:0007669"/>
    <property type="project" value="UniProtKB-KW"/>
</dbReference>
<dbReference type="GO" id="GO:0004523">
    <property type="term" value="F:RNA-DNA hybrid ribonuclease activity"/>
    <property type="evidence" value="ECO:0007669"/>
    <property type="project" value="UniProtKB-EC"/>
</dbReference>
<dbReference type="GO" id="GO:0008270">
    <property type="term" value="F:zinc ion binding"/>
    <property type="evidence" value="ECO:0007669"/>
    <property type="project" value="UniProtKB-KW"/>
</dbReference>
<dbReference type="GO" id="GO:0015074">
    <property type="term" value="P:DNA integration"/>
    <property type="evidence" value="ECO:0007669"/>
    <property type="project" value="UniProtKB-KW"/>
</dbReference>
<dbReference type="GO" id="GO:0006310">
    <property type="term" value="P:DNA recombination"/>
    <property type="evidence" value="ECO:0007669"/>
    <property type="project" value="UniProtKB-KW"/>
</dbReference>
<dbReference type="GO" id="GO:0000731">
    <property type="term" value="P:DNA synthesis involved in DNA repair"/>
    <property type="evidence" value="ECO:0007669"/>
    <property type="project" value="UniProtKB-ARBA"/>
</dbReference>
<dbReference type="GO" id="GO:0006261">
    <property type="term" value="P:DNA-templated DNA replication"/>
    <property type="evidence" value="ECO:0007669"/>
    <property type="project" value="UniProtKB-ARBA"/>
</dbReference>
<dbReference type="CDD" id="cd09273">
    <property type="entry name" value="RNase_HI_RT_Bel"/>
    <property type="match status" value="1"/>
</dbReference>
<dbReference type="CDD" id="cd01645">
    <property type="entry name" value="RT_Rtv"/>
    <property type="match status" value="1"/>
</dbReference>
<dbReference type="FunFam" id="3.30.70.270:FF:000085">
    <property type="entry name" value="Endogenous retrovirus group K member 10 Pol protein"/>
    <property type="match status" value="1"/>
</dbReference>
<dbReference type="FunFam" id="3.30.420.10:FF:000145">
    <property type="entry name" value="Endogenous retrovirus group K member 18 Pol protein"/>
    <property type="match status" value="1"/>
</dbReference>
<dbReference type="FunFam" id="3.30.420.10:FF:000146">
    <property type="entry name" value="Endogenous retrovirus group K member 6 Pol protein"/>
    <property type="match status" value="1"/>
</dbReference>
<dbReference type="Gene3D" id="1.10.10.200">
    <property type="match status" value="1"/>
</dbReference>
<dbReference type="Gene3D" id="3.30.70.270">
    <property type="match status" value="2"/>
</dbReference>
<dbReference type="Gene3D" id="3.10.10.10">
    <property type="entry name" value="HIV Type 1 Reverse Transcriptase, subunit A, domain 1"/>
    <property type="match status" value="1"/>
</dbReference>
<dbReference type="Gene3D" id="2.30.30.10">
    <property type="entry name" value="Integrase, C-terminal domain superfamily, retroviral"/>
    <property type="match status" value="1"/>
</dbReference>
<dbReference type="Gene3D" id="3.30.420.10">
    <property type="entry name" value="Ribonuclease H-like superfamily/Ribonuclease H"/>
    <property type="match status" value="2"/>
</dbReference>
<dbReference type="InterPro" id="IPR043502">
    <property type="entry name" value="DNA/RNA_pol_sf"/>
</dbReference>
<dbReference type="InterPro" id="IPR017856">
    <property type="entry name" value="Integrase-like_N"/>
</dbReference>
<dbReference type="InterPro" id="IPR036862">
    <property type="entry name" value="Integrase_C_dom_sf_retrovir"/>
</dbReference>
<dbReference type="InterPro" id="IPR001037">
    <property type="entry name" value="Integrase_C_retrovir"/>
</dbReference>
<dbReference type="InterPro" id="IPR001584">
    <property type="entry name" value="Integrase_cat-core"/>
</dbReference>
<dbReference type="InterPro" id="IPR003308">
    <property type="entry name" value="Integrase_Zn-bd_dom_N"/>
</dbReference>
<dbReference type="InterPro" id="IPR043128">
    <property type="entry name" value="Rev_trsase/Diguanyl_cyclase"/>
</dbReference>
<dbReference type="InterPro" id="IPR012337">
    <property type="entry name" value="RNaseH-like_sf"/>
</dbReference>
<dbReference type="InterPro" id="IPR002156">
    <property type="entry name" value="RNaseH_domain"/>
</dbReference>
<dbReference type="InterPro" id="IPR036397">
    <property type="entry name" value="RNaseH_sf"/>
</dbReference>
<dbReference type="InterPro" id="IPR000477">
    <property type="entry name" value="RT_dom"/>
</dbReference>
<dbReference type="InterPro" id="IPR010661">
    <property type="entry name" value="RVT_thumb"/>
</dbReference>
<dbReference type="PANTHER" id="PTHR41694:SF4">
    <property type="entry name" value="ENDOGENOUS RETROVIRUS GROUP K MEMBER 10 POL PROTEIN-RELATED"/>
    <property type="match status" value="1"/>
</dbReference>
<dbReference type="PANTHER" id="PTHR41694">
    <property type="entry name" value="ENDOGENOUS RETROVIRUS GROUP K MEMBER POL PROTEIN"/>
    <property type="match status" value="1"/>
</dbReference>
<dbReference type="Pfam" id="PF00552">
    <property type="entry name" value="IN_DBD_C"/>
    <property type="match status" value="1"/>
</dbReference>
<dbReference type="Pfam" id="PF02022">
    <property type="entry name" value="Integrase_Zn"/>
    <property type="match status" value="1"/>
</dbReference>
<dbReference type="Pfam" id="PF00075">
    <property type="entry name" value="RNase_H"/>
    <property type="match status" value="1"/>
</dbReference>
<dbReference type="Pfam" id="PF00665">
    <property type="entry name" value="rve"/>
    <property type="match status" value="1"/>
</dbReference>
<dbReference type="Pfam" id="PF00078">
    <property type="entry name" value="RVT_1"/>
    <property type="match status" value="1"/>
</dbReference>
<dbReference type="Pfam" id="PF06817">
    <property type="entry name" value="RVT_thumb"/>
    <property type="match status" value="1"/>
</dbReference>
<dbReference type="SUPFAM" id="SSF50122">
    <property type="entry name" value="DNA-binding domain of retroviral integrase"/>
    <property type="match status" value="1"/>
</dbReference>
<dbReference type="SUPFAM" id="SSF56672">
    <property type="entry name" value="DNA/RNA polymerases"/>
    <property type="match status" value="1"/>
</dbReference>
<dbReference type="SUPFAM" id="SSF46919">
    <property type="entry name" value="N-terminal Zn binding domain of HIV integrase"/>
    <property type="match status" value="1"/>
</dbReference>
<dbReference type="SUPFAM" id="SSF53098">
    <property type="entry name" value="Ribonuclease H-like"/>
    <property type="match status" value="2"/>
</dbReference>
<dbReference type="PROSITE" id="PS50994">
    <property type="entry name" value="INTEGRASE"/>
    <property type="match status" value="1"/>
</dbReference>
<dbReference type="PROSITE" id="PS51027">
    <property type="entry name" value="INTEGRASE_DBD"/>
    <property type="match status" value="1"/>
</dbReference>
<dbReference type="PROSITE" id="PS50879">
    <property type="entry name" value="RNASE_H_1"/>
    <property type="match status" value="1"/>
</dbReference>
<dbReference type="PROSITE" id="PS50878">
    <property type="entry name" value="RT_POL"/>
    <property type="match status" value="1"/>
</dbReference>
<dbReference type="PROSITE" id="PS50876">
    <property type="entry name" value="ZF_INTEGRASE"/>
    <property type="match status" value="1"/>
</dbReference>
<protein>
    <recommendedName>
        <fullName>Endogenous retrovirus group K member 6 Pol protein</fullName>
    </recommendedName>
    <alternativeName>
        <fullName>HERV-K(C7) Pol protein</fullName>
    </alternativeName>
    <alternativeName>
        <fullName>HERV-K(HML-2.HOM) Pol protein</fullName>
    </alternativeName>
    <alternativeName>
        <fullName>HERV-K108 Pol protein</fullName>
    </alternativeName>
    <alternativeName>
        <fullName>HERV-K_7p22.1 provirus ancestral Pol protein</fullName>
    </alternativeName>
    <domain>
        <recommendedName>
            <fullName>Reverse transcriptase</fullName>
            <shortName>RT</shortName>
            <ecNumber>2.7.7.49</ecNumber>
        </recommendedName>
    </domain>
    <domain>
        <recommendedName>
            <fullName>Ribonuclease H</fullName>
            <shortName>RNase H</shortName>
            <ecNumber>3.1.26.4</ecNumber>
        </recommendedName>
    </domain>
    <domain>
        <recommendedName>
            <fullName>Integrase</fullName>
            <shortName>IN</shortName>
        </recommendedName>
    </domain>
</protein>
<keyword id="KW-0229">DNA integration</keyword>
<keyword id="KW-0233">DNA recombination</keyword>
<keyword id="KW-0238">DNA-binding</keyword>
<keyword id="KW-0255">Endonuclease</keyword>
<keyword id="KW-0895">ERV</keyword>
<keyword id="KW-0378">Hydrolase</keyword>
<keyword id="KW-0479">Metal-binding</keyword>
<keyword id="KW-0511">Multifunctional enzyme</keyword>
<keyword id="KW-0540">Nuclease</keyword>
<keyword id="KW-0548">Nucleotidyltransferase</keyword>
<keyword id="KW-1185">Reference proteome</keyword>
<keyword id="KW-0695">RNA-directed DNA polymerase</keyword>
<keyword id="KW-0808">Transferase</keyword>
<keyword id="KW-0814">Transposable element</keyword>
<keyword id="KW-0862">Zinc</keyword>
<keyword id="KW-0863">Zinc-finger</keyword>
<name>POK6_HUMAN</name>
<gene>
    <name type="primary">ERVK-6</name>
    <name type="synonym">ERVK6</name>
</gene>
<reference key="1">
    <citation type="journal article" date="1999" name="Nat. Genet.">
        <title>An almost-intact human endogenous retrovirus K on human chromosome 7.</title>
        <authorList>
            <person name="Mayer J."/>
            <person name="Sauter M."/>
            <person name="Racz A."/>
            <person name="Scherer D."/>
            <person name="Mueller-Lantzsch N."/>
            <person name="Meese E.U."/>
        </authorList>
    </citation>
    <scope>NUCLEOTIDE SEQUENCE [GENOMIC DNA]</scope>
</reference>
<reference key="2">
    <citation type="journal article" date="1999" name="Curr. Biol.">
        <title>Many human endogenous retrovirus K (HERV-K) proviruses are unique to humans.</title>
        <authorList>
            <person name="Barbulescu M."/>
            <person name="Turner G."/>
            <person name="Seaman M.I."/>
            <person name="Deinard A.S."/>
            <person name="Kidd K.K."/>
            <person name="Lenz J."/>
        </authorList>
    </citation>
    <scope>NUCLEOTIDE SEQUENCE [GENOMIC DNA]</scope>
</reference>
<reference key="3">
    <citation type="journal article" date="2001" name="Genomics">
        <title>Genomic organization of the human endogenous retrovirus HERV-K(HML-2.HOM) (ERVK6) on chromosome 7.</title>
        <authorList>
            <person name="Reus K."/>
            <person name="Mayer J."/>
            <person name="Sauter M."/>
            <person name="Scherer D."/>
            <person name="Mueller-Lantzsch N."/>
            <person name="Meese E.U."/>
        </authorList>
    </citation>
    <scope>NUCLEOTIDE SEQUENCE [GENOMIC DNA]</scope>
</reference>
<reference key="4">
    <citation type="journal article" date="1999" name="J. Virol.">
        <title>Genome wide screening, cloning, chromosomal assignment and expression of full-length human endogenous retrovirus type K (HERV-K).</title>
        <authorList>
            <person name="Toenjes R.R."/>
            <person name="Czauderna F."/>
            <person name="Kurth R."/>
        </authorList>
    </citation>
    <scope>NUCLEOTIDE SEQUENCE [GENOMIC DNA]</scope>
</reference>
<reference key="5">
    <citation type="journal article" date="2003" name="Nature">
        <title>The DNA sequence of human chromosome 7.</title>
        <authorList>
            <person name="Hillier L.W."/>
            <person name="Fulton R.S."/>
            <person name="Fulton L.A."/>
            <person name="Graves T.A."/>
            <person name="Pepin K.H."/>
            <person name="Wagner-McPherson C."/>
            <person name="Layman D."/>
            <person name="Maas J."/>
            <person name="Jaeger S."/>
            <person name="Walker R."/>
            <person name="Wylie K."/>
            <person name="Sekhon M."/>
            <person name="Becker M.C."/>
            <person name="O'Laughlin M.D."/>
            <person name="Schaller M.E."/>
            <person name="Fewell G.A."/>
            <person name="Delehaunty K.D."/>
            <person name="Miner T.L."/>
            <person name="Nash W.E."/>
            <person name="Cordes M."/>
            <person name="Du H."/>
            <person name="Sun H."/>
            <person name="Edwards J."/>
            <person name="Bradshaw-Cordum H."/>
            <person name="Ali J."/>
            <person name="Andrews S."/>
            <person name="Isak A."/>
            <person name="Vanbrunt A."/>
            <person name="Nguyen C."/>
            <person name="Du F."/>
            <person name="Lamar B."/>
            <person name="Courtney L."/>
            <person name="Kalicki J."/>
            <person name="Ozersky P."/>
            <person name="Bielicki L."/>
            <person name="Scott K."/>
            <person name="Holmes A."/>
            <person name="Harkins R."/>
            <person name="Harris A."/>
            <person name="Strong C.M."/>
            <person name="Hou S."/>
            <person name="Tomlinson C."/>
            <person name="Dauphin-Kohlberg S."/>
            <person name="Kozlowicz-Reilly A."/>
            <person name="Leonard S."/>
            <person name="Rohlfing T."/>
            <person name="Rock S.M."/>
            <person name="Tin-Wollam A.-M."/>
            <person name="Abbott A."/>
            <person name="Minx P."/>
            <person name="Maupin R."/>
            <person name="Strowmatt C."/>
            <person name="Latreille P."/>
            <person name="Miller N."/>
            <person name="Johnson D."/>
            <person name="Murray J."/>
            <person name="Woessner J.P."/>
            <person name="Wendl M.C."/>
            <person name="Yang S.-P."/>
            <person name="Schultz B.R."/>
            <person name="Wallis J.W."/>
            <person name="Spieth J."/>
            <person name="Bieri T.A."/>
            <person name="Nelson J.O."/>
            <person name="Berkowicz N."/>
            <person name="Wohldmann P.E."/>
            <person name="Cook L.L."/>
            <person name="Hickenbotham M.T."/>
            <person name="Eldred J."/>
            <person name="Williams D."/>
            <person name="Bedell J.A."/>
            <person name="Mardis E.R."/>
            <person name="Clifton S.W."/>
            <person name="Chissoe S.L."/>
            <person name="Marra M.A."/>
            <person name="Raymond C."/>
            <person name="Haugen E."/>
            <person name="Gillett W."/>
            <person name="Zhou Y."/>
            <person name="James R."/>
            <person name="Phelps K."/>
            <person name="Iadanoto S."/>
            <person name="Bubb K."/>
            <person name="Simms E."/>
            <person name="Levy R."/>
            <person name="Clendenning J."/>
            <person name="Kaul R."/>
            <person name="Kent W.J."/>
            <person name="Furey T.S."/>
            <person name="Baertsch R.A."/>
            <person name="Brent M.R."/>
            <person name="Keibler E."/>
            <person name="Flicek P."/>
            <person name="Bork P."/>
            <person name="Suyama M."/>
            <person name="Bailey J.A."/>
            <person name="Portnoy M.E."/>
            <person name="Torrents D."/>
            <person name="Chinwalla A.T."/>
            <person name="Gish W.R."/>
            <person name="Eddy S.R."/>
            <person name="McPherson J.D."/>
            <person name="Olson M.V."/>
            <person name="Eichler E.E."/>
            <person name="Green E.D."/>
            <person name="Waterston R.H."/>
            <person name="Wilson R.K."/>
        </authorList>
    </citation>
    <scope>NUCLEOTIDE SEQUENCE [LARGE SCALE GENOMIC DNA]</scope>
</reference>
<reference key="6">
    <citation type="journal article" date="1999" name="J. Virol.">
        <title>Identification of an active reverse transcriptase enzyme encoded by a human endogenous HERV-K retrovirus.</title>
        <authorList>
            <person name="Berkhout B."/>
            <person name="Jebbink M."/>
            <person name="Zsiros J."/>
        </authorList>
    </citation>
    <scope>NUCLEOTIDE SEQUENCE [MRNA] OF 18-589</scope>
    <source>
        <tissue>Bone marrow</tissue>
    </source>
</reference>
<organism>
    <name type="scientific">Homo sapiens</name>
    <name type="common">Human</name>
    <dbReference type="NCBI Taxonomy" id="9606"/>
    <lineage>
        <taxon>Eukaryota</taxon>
        <taxon>Metazoa</taxon>
        <taxon>Chordata</taxon>
        <taxon>Craniata</taxon>
        <taxon>Vertebrata</taxon>
        <taxon>Euteleostomi</taxon>
        <taxon>Mammalia</taxon>
        <taxon>Eutheria</taxon>
        <taxon>Euarchontoglires</taxon>
        <taxon>Primates</taxon>
        <taxon>Haplorrhini</taxon>
        <taxon>Catarrhini</taxon>
        <taxon>Hominidae</taxon>
        <taxon>Homo</taxon>
    </lineage>
</organism>
<comment type="function">
    <text>Early post-infection, the reverse transcriptase converts the viral RNA genome into double-stranded viral DNA. The RNase H domain of the reverse transcriptase performs two functions. It degrades the RNA template and specifically removes the RNA primer from the RNA/DNA hybrid. Following nuclear import, the integrase catalyzes the insertion of the linear, double-stranded viral DNA into the host cell chromosome. Endogenous Pol proteins may have kept, lost or modified their original function during evolution.</text>
</comment>
<comment type="catalytic activity">
    <reaction evidence="1">
        <text>DNA(n) + a 2'-deoxyribonucleoside 5'-triphosphate = DNA(n+1) + diphosphate</text>
        <dbReference type="Rhea" id="RHEA:22508"/>
        <dbReference type="Rhea" id="RHEA-COMP:17339"/>
        <dbReference type="Rhea" id="RHEA-COMP:17340"/>
        <dbReference type="ChEBI" id="CHEBI:33019"/>
        <dbReference type="ChEBI" id="CHEBI:61560"/>
        <dbReference type="ChEBI" id="CHEBI:173112"/>
        <dbReference type="EC" id="2.7.7.49"/>
    </reaction>
</comment>
<comment type="catalytic activity">
    <reaction evidence="2">
        <text>Endonucleolytic cleavage to 5'-phosphomonoester.</text>
        <dbReference type="EC" id="3.1.26.4"/>
    </reaction>
</comment>
<comment type="domain">
    <text>The LPQG and YXDD motifs are catalytically important and conserved among many retroviruses.</text>
</comment>
<comment type="PTM">
    <text>Cleavage sites that yield the mature proteins remain to be determined.</text>
</comment>
<comment type="miscellaneous">
    <text>This protein is synthesized as Gag-Pro and Gag-Pro-Pol polyprotein precursors. These polyproteins are thought, by similarity with type-B retroviruses, to be generated by -1 frameshifts occurring at the Gag-Pro and Pro-Pol genes boundaries.</text>
</comment>
<comment type="miscellaneous">
    <text>Exact N-terminus of this protein has not been formally described.</text>
</comment>
<comment type="miscellaneous">
    <text>Two human-specific proviruses are inserted as tandem repeats with a shared LTR in most individuals tested. The telomeric copy is referred here as 'provirus 41574'. The centromeric copy is referred here as 'provirus 41575'.</text>
</comment>
<comment type="similarity">
    <text evidence="7">Belongs to the beta type-B retroviral polymerase family. HERV class-II K(HML-2) pol subfamily.</text>
</comment>
<comment type="sequence caution" evidence="7">
    <conflict type="frameshift">
        <sequence resource="EMBL-CDS" id="AAD51797"/>
    </conflict>
    <text>A -1 frameshift presumed to occur at the N-terminus at the Pro-Pol gene boundary.</text>
</comment>
<comment type="sequence caution" evidence="7">
    <conflict type="erroneous initiation">
        <sequence resource="EMBL-CDS" id="CAA76879"/>
    </conflict>
</comment>
<comment type="sequence caution" evidence="7">
    <conflict type="erroneous initiation">
        <sequence resource="EMBL-CDS" id="CAA76885"/>
    </conflict>
</comment>
<feature type="chain" id="PRO_0000186762" description="Endogenous retrovirus group K member 6 Pol protein">
    <location>
        <begin position="1"/>
        <end position="956"/>
    </location>
</feature>
<feature type="domain" description="Reverse transcriptase" evidence="1">
    <location>
        <begin position="57"/>
        <end position="245"/>
    </location>
</feature>
<feature type="domain" description="RNase H type-1" evidence="2">
    <location>
        <begin position="460"/>
        <end position="590"/>
    </location>
</feature>
<feature type="domain" description="Integrase catalytic" evidence="4">
    <location>
        <begin position="642"/>
        <end position="803"/>
    </location>
</feature>
<feature type="zinc finger region" description="Integrase-type" evidence="3">
    <location>
        <begin position="587"/>
        <end position="628"/>
    </location>
</feature>
<feature type="DNA-binding region" description="Integrase-type" evidence="5">
    <location>
        <begin position="811"/>
        <end position="859"/>
    </location>
</feature>
<feature type="region of interest" description="Disordered" evidence="6">
    <location>
        <begin position="865"/>
        <end position="890"/>
    </location>
</feature>
<feature type="short sequence motif" description="LPQG">
    <location>
        <begin position="161"/>
        <end position="164"/>
    </location>
</feature>
<feature type="short sequence motif" description="YXDD">
    <location>
        <begin position="195"/>
        <end position="198"/>
    </location>
</feature>
<feature type="compositionally biased region" description="Low complexity" evidence="6">
    <location>
        <begin position="869"/>
        <end position="879"/>
    </location>
</feature>
<feature type="binding site" evidence="2">
    <location>
        <position position="469"/>
    </location>
    <ligand>
        <name>Mg(2+)</name>
        <dbReference type="ChEBI" id="CHEBI:18420"/>
        <label>1</label>
    </ligand>
</feature>
<feature type="binding site" evidence="2">
    <location>
        <position position="469"/>
    </location>
    <ligand>
        <name>Mg(2+)</name>
        <dbReference type="ChEBI" id="CHEBI:18420"/>
        <label>2</label>
    </ligand>
</feature>
<feature type="binding site" evidence="2">
    <location>
        <position position="497"/>
    </location>
    <ligand>
        <name>Mg(2+)</name>
        <dbReference type="ChEBI" id="CHEBI:18420"/>
        <label>1</label>
    </ligand>
</feature>
<feature type="binding site" evidence="2">
    <location>
        <position position="517"/>
    </location>
    <ligand>
        <name>Mg(2+)</name>
        <dbReference type="ChEBI" id="CHEBI:18420"/>
        <label>1</label>
    </ligand>
</feature>
<feature type="binding site" evidence="2">
    <location>
        <position position="582"/>
    </location>
    <ligand>
        <name>Mg(2+)</name>
        <dbReference type="ChEBI" id="CHEBI:18420"/>
        <label>2</label>
    </ligand>
</feature>
<feature type="binding site" evidence="3">
    <location>
        <position position="596"/>
    </location>
    <ligand>
        <name>Zn(2+)</name>
        <dbReference type="ChEBI" id="CHEBI:29105"/>
    </ligand>
</feature>
<feature type="binding site" evidence="3">
    <location>
        <position position="600"/>
    </location>
    <ligand>
        <name>Zn(2+)</name>
        <dbReference type="ChEBI" id="CHEBI:29105"/>
    </ligand>
</feature>
<feature type="binding site" evidence="3">
    <location>
        <position position="624"/>
    </location>
    <ligand>
        <name>Zn(2+)</name>
        <dbReference type="ChEBI" id="CHEBI:29105"/>
    </ligand>
</feature>
<feature type="binding site" evidence="3">
    <location>
        <position position="627"/>
    </location>
    <ligand>
        <name>Zn(2+)</name>
        <dbReference type="ChEBI" id="CHEBI:29105"/>
    </ligand>
</feature>
<feature type="sequence conflict" description="In Ref. 3; AAK11554." evidence="7" ref="3">
    <original>K</original>
    <variation>R</variation>
    <location>
        <position position="32"/>
    </location>
</feature>
<feature type="sequence conflict" description="In Ref. 6." evidence="7" ref="6">
    <original>A</original>
    <variation>P</variation>
    <location>
        <position position="153"/>
    </location>
</feature>
<feature type="sequence conflict" description="In Ref. 6." evidence="7" ref="6">
    <original>S</original>
    <variation>N</variation>
    <location>
        <position position="168"/>
    </location>
</feature>
<feature type="sequence conflict" description="In Ref. 3 and 5; in provirus 41576." evidence="7" ref="3 5">
    <original>C</original>
    <variation>Y</variation>
    <location>
        <position position="195"/>
    </location>
</feature>
<feature type="sequence conflict" description="In Ref. 6." evidence="7" ref="6">
    <original>F</original>
    <variation>L</variation>
    <location>
        <position position="268"/>
    </location>
</feature>
<feature type="sequence conflict" description="In Ref. 6." evidence="7" ref="6">
    <original>S</original>
    <variation>P</variation>
    <location>
        <position position="290"/>
    </location>
</feature>
<feature type="sequence conflict" description="In Ref. 6." evidence="7" ref="6">
    <original>R</original>
    <variation>Q</variation>
    <location>
        <position position="565"/>
    </location>
</feature>
<feature type="sequence conflict" description="In Ref. 4; CAA76885." evidence="7" ref="4">
    <original>T</original>
    <variation>A</variation>
    <location>
        <position position="599"/>
    </location>
</feature>
<feature type="sequence conflict" description="In Ref. 3; AAK11554." evidence="7" ref="3">
    <original>G</original>
    <variation>E</variation>
    <location>
        <position position="661"/>
    </location>
</feature>
<feature type="sequence conflict" description="In Ref. 4; CAA76879." evidence="7" ref="4">
    <original>N</original>
    <variation>S</variation>
    <location>
        <position position="818"/>
    </location>
</feature>